<dbReference type="EC" id="1.2.4.2" evidence="8 9"/>
<dbReference type="EC" id="2.3.1.61" evidence="8"/>
<dbReference type="EMBL" id="D84102">
    <property type="protein sequence ID" value="BAA12222.2"/>
    <property type="molecule type" value="Genomic_DNA"/>
</dbReference>
<dbReference type="EMBL" id="BA000036">
    <property type="protein sequence ID" value="BAB98522.1"/>
    <property type="status" value="ALT_INIT"/>
    <property type="molecule type" value="Genomic_DNA"/>
</dbReference>
<dbReference type="EMBL" id="BX927151">
    <property type="protein sequence ID" value="CAF19835.1"/>
    <property type="status" value="ALT_INIT"/>
    <property type="molecule type" value="Genomic_DNA"/>
</dbReference>
<dbReference type="RefSeq" id="NP_600357.3">
    <property type="nucleotide sequence ID" value="NC_003450.3"/>
</dbReference>
<dbReference type="RefSeq" id="WP_011014138.1">
    <property type="nucleotide sequence ID" value="NC_006958.1"/>
</dbReference>
<dbReference type="PDB" id="8P5S">
    <property type="method" value="X-ray"/>
    <property type="resolution" value="2.46 A"/>
    <property type="chains" value="A=98-1221"/>
</dbReference>
<dbReference type="PDB" id="8P5T">
    <property type="method" value="EM"/>
    <property type="resolution" value="2.17 A"/>
    <property type="chains" value="A/B/C/D/E/F=1-1221"/>
</dbReference>
<dbReference type="PDB" id="8P5U">
    <property type="method" value="EM"/>
    <property type="resolution" value="2.17 A"/>
    <property type="chains" value="A/B/C/D/E/F=1-1221"/>
</dbReference>
<dbReference type="PDB" id="8P5V">
    <property type="method" value="EM"/>
    <property type="resolution" value="2.07 A"/>
    <property type="chains" value="A/B/C/D/E/F=1-1221"/>
</dbReference>
<dbReference type="PDB" id="8P5W">
    <property type="method" value="EM"/>
    <property type="resolution" value="2.26 A"/>
    <property type="chains" value="A/B/C/D/E/F=1-1221"/>
</dbReference>
<dbReference type="PDB" id="8P5X">
    <property type="method" value="EM"/>
    <property type="resolution" value="2.29 A"/>
    <property type="chains" value="A/B/C/D/E/F=1-1221"/>
</dbReference>
<dbReference type="PDBsum" id="8P5S"/>
<dbReference type="PDBsum" id="8P5T"/>
<dbReference type="PDBsum" id="8P5U"/>
<dbReference type="PDBsum" id="8P5V"/>
<dbReference type="PDBsum" id="8P5W"/>
<dbReference type="PDBsum" id="8P5X"/>
<dbReference type="EMDB" id="EMD-17452"/>
<dbReference type="EMDB" id="EMD-17453"/>
<dbReference type="EMDB" id="EMD-17454"/>
<dbReference type="EMDB" id="EMD-17455"/>
<dbReference type="EMDB" id="EMD-17456"/>
<dbReference type="SMR" id="Q8NRC3"/>
<dbReference type="IntAct" id="Q8NRC3">
    <property type="interactions" value="1"/>
</dbReference>
<dbReference type="MINT" id="Q8NRC3"/>
<dbReference type="STRING" id="196627.cg1280"/>
<dbReference type="KEGG" id="cgb:cg1280"/>
<dbReference type="KEGG" id="cgl:Cgl1129"/>
<dbReference type="PATRIC" id="fig|196627.13.peg.1108"/>
<dbReference type="eggNOG" id="COG0508">
    <property type="taxonomic scope" value="Bacteria"/>
</dbReference>
<dbReference type="eggNOG" id="COG0567">
    <property type="taxonomic scope" value="Bacteria"/>
</dbReference>
<dbReference type="HOGENOM" id="CLU_004709_1_0_11"/>
<dbReference type="OrthoDB" id="9759785at2"/>
<dbReference type="BioCyc" id="CORYNE:G18NG-10701-MONOMER"/>
<dbReference type="BRENDA" id="1.2.1.105">
    <property type="organism ID" value="960"/>
</dbReference>
<dbReference type="SABIO-RK" id="Q8NRC3"/>
<dbReference type="UniPathway" id="UPA00223">
    <property type="reaction ID" value="UER00997"/>
</dbReference>
<dbReference type="Proteomes" id="UP000000582">
    <property type="component" value="Chromosome"/>
</dbReference>
<dbReference type="Proteomes" id="UP000001009">
    <property type="component" value="Chromosome"/>
</dbReference>
<dbReference type="GO" id="GO:0005829">
    <property type="term" value="C:cytosol"/>
    <property type="evidence" value="ECO:0007669"/>
    <property type="project" value="TreeGrafter"/>
</dbReference>
<dbReference type="GO" id="GO:0045252">
    <property type="term" value="C:oxoglutarate dehydrogenase complex"/>
    <property type="evidence" value="ECO:0007669"/>
    <property type="project" value="TreeGrafter"/>
</dbReference>
<dbReference type="GO" id="GO:0004149">
    <property type="term" value="F:dihydrolipoyllysine-residue succinyltransferase activity"/>
    <property type="evidence" value="ECO:0007669"/>
    <property type="project" value="UniProtKB-EC"/>
</dbReference>
<dbReference type="GO" id="GO:0000287">
    <property type="term" value="F:magnesium ion binding"/>
    <property type="evidence" value="ECO:0007669"/>
    <property type="project" value="UniProtKB-ARBA"/>
</dbReference>
<dbReference type="GO" id="GO:0004591">
    <property type="term" value="F:oxoglutarate dehydrogenase (succinyl-transferring) activity"/>
    <property type="evidence" value="ECO:0007669"/>
    <property type="project" value="UniProtKB-EC"/>
</dbReference>
<dbReference type="GO" id="GO:0030976">
    <property type="term" value="F:thiamine pyrophosphate binding"/>
    <property type="evidence" value="ECO:0007669"/>
    <property type="project" value="InterPro"/>
</dbReference>
<dbReference type="GO" id="GO:0006099">
    <property type="term" value="P:tricarboxylic acid cycle"/>
    <property type="evidence" value="ECO:0007669"/>
    <property type="project" value="UniProtKB-UniPathway"/>
</dbReference>
<dbReference type="CDD" id="cd02016">
    <property type="entry name" value="TPP_E1_OGDC_like"/>
    <property type="match status" value="1"/>
</dbReference>
<dbReference type="Gene3D" id="3.40.50.12470">
    <property type="match status" value="1"/>
</dbReference>
<dbReference type="Gene3D" id="3.40.50.970">
    <property type="match status" value="1"/>
</dbReference>
<dbReference type="Gene3D" id="3.30.559.10">
    <property type="entry name" value="Chloramphenicol acetyltransferase-like domain"/>
    <property type="match status" value="1"/>
</dbReference>
<dbReference type="Gene3D" id="3.40.50.11610">
    <property type="entry name" value="Multifunctional 2-oxoglutarate metabolism enzyme, C-terminal domain"/>
    <property type="match status" value="1"/>
</dbReference>
<dbReference type="Gene3D" id="1.10.287.1150">
    <property type="entry name" value="TPP helical domain"/>
    <property type="match status" value="1"/>
</dbReference>
<dbReference type="InterPro" id="IPR001078">
    <property type="entry name" value="2-oxoacid_DH_actylTfrase"/>
</dbReference>
<dbReference type="InterPro" id="IPR032106">
    <property type="entry name" value="2-oxogl_dehyd_N"/>
</dbReference>
<dbReference type="InterPro" id="IPR011603">
    <property type="entry name" value="2oxoglutarate_DH_E1"/>
</dbReference>
<dbReference type="InterPro" id="IPR023213">
    <property type="entry name" value="CAT-like_dom_sf"/>
</dbReference>
<dbReference type="InterPro" id="IPR001017">
    <property type="entry name" value="DH_E1"/>
</dbReference>
<dbReference type="InterPro" id="IPR042179">
    <property type="entry name" value="KGD_C_sf"/>
</dbReference>
<dbReference type="InterPro" id="IPR031717">
    <property type="entry name" value="ODO-1/KGD_C"/>
</dbReference>
<dbReference type="InterPro" id="IPR029061">
    <property type="entry name" value="THDP-binding"/>
</dbReference>
<dbReference type="InterPro" id="IPR005475">
    <property type="entry name" value="Transketolase-like_Pyr-bd"/>
</dbReference>
<dbReference type="NCBIfam" id="TIGR00239">
    <property type="entry name" value="2oxo_dh_E1"/>
    <property type="match status" value="1"/>
</dbReference>
<dbReference type="NCBIfam" id="NF006914">
    <property type="entry name" value="PRK09404.1"/>
    <property type="match status" value="1"/>
</dbReference>
<dbReference type="NCBIfam" id="NF008907">
    <property type="entry name" value="PRK12270.1"/>
    <property type="match status" value="1"/>
</dbReference>
<dbReference type="PANTHER" id="PTHR23152:SF4">
    <property type="entry name" value="2-OXOADIPATE DEHYDROGENASE COMPLEX COMPONENT E1"/>
    <property type="match status" value="1"/>
</dbReference>
<dbReference type="PANTHER" id="PTHR23152">
    <property type="entry name" value="2-OXOGLUTARATE DEHYDROGENASE"/>
    <property type="match status" value="1"/>
</dbReference>
<dbReference type="Pfam" id="PF00198">
    <property type="entry name" value="2-oxoacid_dh"/>
    <property type="match status" value="1"/>
</dbReference>
<dbReference type="Pfam" id="PF16078">
    <property type="entry name" value="2-oxogl_dehyd_N"/>
    <property type="match status" value="1"/>
</dbReference>
<dbReference type="Pfam" id="PF00676">
    <property type="entry name" value="E1_dh"/>
    <property type="match status" value="1"/>
</dbReference>
<dbReference type="Pfam" id="PF16870">
    <property type="entry name" value="OxoGdeHyase_C"/>
    <property type="match status" value="1"/>
</dbReference>
<dbReference type="Pfam" id="PF02779">
    <property type="entry name" value="Transket_pyr"/>
    <property type="match status" value="1"/>
</dbReference>
<dbReference type="PIRSF" id="PIRSF000157">
    <property type="entry name" value="Oxoglu_dh_E1"/>
    <property type="match status" value="1"/>
</dbReference>
<dbReference type="SMART" id="SM00861">
    <property type="entry name" value="Transket_pyr"/>
    <property type="match status" value="1"/>
</dbReference>
<dbReference type="SUPFAM" id="SSF52777">
    <property type="entry name" value="CoA-dependent acyltransferases"/>
    <property type="match status" value="1"/>
</dbReference>
<dbReference type="SUPFAM" id="SSF52518">
    <property type="entry name" value="Thiamin diphosphate-binding fold (THDP-binding)"/>
    <property type="match status" value="2"/>
</dbReference>
<gene>
    <name evidence="11" type="primary">odhA</name>
    <name type="ordered locus">Cgl1129</name>
    <name type="ordered locus">cg1280</name>
</gene>
<protein>
    <recommendedName>
        <fullName>2-oxoglutarate dehydrogenase E1/E2 component</fullName>
        <shortName>ODH E1/E2 component</shortName>
    </recommendedName>
    <domain>
        <recommendedName>
            <fullName>2-oxoglutarate dehydrogenase E1 component</fullName>
            <shortName>ODH E1 component</shortName>
            <ecNumber evidence="8 9">1.2.4.2</ecNumber>
        </recommendedName>
        <alternativeName>
            <fullName>Alpha-ketoglutarate dehydrogenase E1 component</fullName>
            <shortName>KDH E1 component</shortName>
        </alternativeName>
    </domain>
    <domain>
        <recommendedName>
            <fullName>Dihydrolipoyllysine-residue succinyltransferase component of 2-oxoglutarate dehydrogenase complex</fullName>
            <ecNumber evidence="8">2.3.1.61</ecNumber>
        </recommendedName>
        <alternativeName>
            <fullName>2-oxoglutarate dehydrogenase complex E2 component</fullName>
            <shortName>ODH E2 component</shortName>
            <shortName>OGDC-E2</shortName>
        </alternativeName>
        <alternativeName>
            <fullName>Dihydrolipoamide succinyltransferase</fullName>
        </alternativeName>
    </domain>
</protein>
<comment type="function">
    <text evidence="8">Catalyzes the E1 and E2 reactions as part of 2-oxoglutarate dehydrogenase (ODH) activity, to convert 2-oxoglutarate to succinyl-CoA and CO(2). OdhA has reductase activity with 2-oxoglutarate but does not react with pyruvate, and also displays transsuccinylase but no transacetylase activity. Since OdhA is not lipoylated, the succinyltransferase activity of its E2 domain is dependent on lipoyl residues of the acetyltransferase AceF.</text>
</comment>
<comment type="catalytic activity">
    <reaction evidence="8 9">
        <text>N(6)-[(R)-lipoyl]-L-lysyl-[protein] + 2-oxoglutarate + H(+) = N(6)-[(R)-S(8)-succinyldihydrolipoyl]-L-lysyl-[protein] + CO2</text>
        <dbReference type="Rhea" id="RHEA:12188"/>
        <dbReference type="Rhea" id="RHEA-COMP:10474"/>
        <dbReference type="Rhea" id="RHEA-COMP:20092"/>
        <dbReference type="ChEBI" id="CHEBI:15378"/>
        <dbReference type="ChEBI" id="CHEBI:16526"/>
        <dbReference type="ChEBI" id="CHEBI:16810"/>
        <dbReference type="ChEBI" id="CHEBI:83099"/>
        <dbReference type="ChEBI" id="CHEBI:83120"/>
        <dbReference type="EC" id="1.2.4.2"/>
    </reaction>
</comment>
<comment type="catalytic activity">
    <reaction evidence="8">
        <text>N(6)-[(R)-dihydrolipoyl]-L-lysyl-[protein] + succinyl-CoA = N(6)-[(R)-S(8)-succinyldihydrolipoyl]-L-lysyl-[protein] + CoA</text>
        <dbReference type="Rhea" id="RHEA:15213"/>
        <dbReference type="Rhea" id="RHEA-COMP:10475"/>
        <dbReference type="Rhea" id="RHEA-COMP:20092"/>
        <dbReference type="ChEBI" id="CHEBI:57287"/>
        <dbReference type="ChEBI" id="CHEBI:57292"/>
        <dbReference type="ChEBI" id="CHEBI:83100"/>
        <dbReference type="ChEBI" id="CHEBI:83120"/>
        <dbReference type="EC" id="2.3.1.61"/>
    </reaction>
</comment>
<comment type="cofactor">
    <cofactor evidence="1">
        <name>Mg(2+)</name>
        <dbReference type="ChEBI" id="CHEBI:18420"/>
    </cofactor>
</comment>
<comment type="cofactor">
    <cofactor evidence="3">
        <name>thiamine diphosphate</name>
        <dbReference type="ChEBI" id="CHEBI:58937"/>
    </cofactor>
</comment>
<comment type="activity regulation">
    <text evidence="7">Inhibited by unphosphorylated OdhI, but not by phosphorylated OdhI.</text>
</comment>
<comment type="biophysicochemical properties">
    <kinetics>
        <KM evidence="8">0.014 mM for 2-oxoglutarate</KM>
    </kinetics>
</comment>
<comment type="pathway">
    <text>Carbohydrate metabolism; tricarboxylic acid cycle; succinyl-CoA from 2-oxoglutarate (dehydrogenase route): step 1/1.</text>
</comment>
<comment type="subunit">
    <text evidence="1 5 7">Homodimer (By similarity). Part of an unusual ODH/PDH supercomplex, consisting of AceE (E1), AceF (E2), and Lpd (E3) together with OdhA (E1+E2). Interacts with the FHA domain of unphosphorylated OdhI via its C-terminal dehydrogenase domain.</text>
</comment>
<comment type="interaction">
    <interactant intactId="EBI-7868591">
        <id>Q8NRC3</id>
    </interactant>
    <interactant intactId="EBI-7868645">
        <id>Q8NQJ3</id>
        <label>odhI</label>
    </interactant>
    <organismsDiffer>false</organismsDiffer>
    <experiments>2</experiments>
</comment>
<comment type="domain">
    <text evidence="7 8">OdhA is a fusion protein with two major domains exhibiting structural features of an E1 and E2 protein, and a short sequence stretch of E1 localized at the N-terminus, which is connected by a linker region to the rest of the protein. Deletion of individual parts of odhA show that all parts of odhA are required for a functional tricarboxylic acid cycle in C.glutamicum; the ODH activity is in fact completely abolished in each of these mutants, and the PDH activity is significantly reduced, which could indicate that the overall structure of the supercomplex is disturbed.</text>
</comment>
<comment type="disruption phenotype">
    <text evidence="6">Strains lacking this gene completely lack 2-oxoglutarate dehydrogenase activity. Deletion of odhA also causes L-glutamate overproduction and accumulation during growth.</text>
</comment>
<comment type="miscellaneous">
    <text>Is non-lipoylated. In contrast, the E2 component AceF is the prominent lipoylated protein in C.glutamicum.</text>
</comment>
<comment type="similarity">
    <text evidence="10">In the N-terminal section; belongs to the alpha-ketoglutarate dehydrogenase family.</text>
</comment>
<comment type="similarity">
    <text evidence="10">In the C-terminal section; belongs to the 2-oxoacid dehydrogenase family.</text>
</comment>
<comment type="sequence caution" evidence="10">
    <conflict type="erroneous initiation">
        <sequence resource="EMBL-CDS" id="BAB98522"/>
    </conflict>
    <text>Extended N-terminus.</text>
</comment>
<comment type="sequence caution" evidence="10">
    <conflict type="erroneous initiation">
        <sequence resource="EMBL-CDS" id="CAF19835"/>
    </conflict>
    <text>Extended N-terminus.</text>
</comment>
<proteinExistence type="evidence at protein level"/>
<reference key="1">
    <citation type="journal article" date="1996" name="Microbiology">
        <title>Molecular cloning of the Corynebacterium glutamicum ('Brevibacterium lactofermentum' AJ12036) odhA gene encoding a novel type of 2-oxoglutarate dehydrogenase.</title>
        <authorList>
            <person name="Usuda Y."/>
            <person name="Tujimoto N."/>
            <person name="Abe C."/>
            <person name="Asakura Y."/>
            <person name="Kimura E."/>
            <person name="Kawahara Y."/>
            <person name="Kurahashi O."/>
            <person name="Matsui H."/>
        </authorList>
    </citation>
    <scope>NUCLEOTIDE SEQUENCE [GENOMIC DNA]</scope>
    <scope>CATALYTIC ACTIVITY</scope>
    <source>
        <strain>AJ12036</strain>
    </source>
</reference>
<reference key="2">
    <citation type="journal article" date="2003" name="Appl. Microbiol. Biotechnol.">
        <title>The Corynebacterium glutamicum genome: features and impacts on biotechnological processes.</title>
        <authorList>
            <person name="Ikeda M."/>
            <person name="Nakagawa S."/>
        </authorList>
    </citation>
    <scope>NUCLEOTIDE SEQUENCE [LARGE SCALE GENOMIC DNA]</scope>
    <source>
        <strain>ATCC 13032 / DSM 20300 / JCM 1318 / BCRC 11384 / CCUG 27702 / LMG 3730 / NBRC 12168 / NCIMB 10025 / NRRL B-2784 / 534</strain>
    </source>
</reference>
<reference key="3">
    <citation type="journal article" date="2003" name="J. Biotechnol.">
        <title>The complete Corynebacterium glutamicum ATCC 13032 genome sequence and its impact on the production of L-aspartate-derived amino acids and vitamins.</title>
        <authorList>
            <person name="Kalinowski J."/>
            <person name="Bathe B."/>
            <person name="Bartels D."/>
            <person name="Bischoff N."/>
            <person name="Bott M."/>
            <person name="Burkovski A."/>
            <person name="Dusch N."/>
            <person name="Eggeling L."/>
            <person name="Eikmanns B.J."/>
            <person name="Gaigalat L."/>
            <person name="Goesmann A."/>
            <person name="Hartmann M."/>
            <person name="Huthmacher K."/>
            <person name="Kraemer R."/>
            <person name="Linke B."/>
            <person name="McHardy A.C."/>
            <person name="Meyer F."/>
            <person name="Moeckel B."/>
            <person name="Pfefferle W."/>
            <person name="Puehler A."/>
            <person name="Rey D.A."/>
            <person name="Rueckert C."/>
            <person name="Rupp O."/>
            <person name="Sahm H."/>
            <person name="Wendisch V.F."/>
            <person name="Wiegraebe I."/>
            <person name="Tauch A."/>
        </authorList>
    </citation>
    <scope>NUCLEOTIDE SEQUENCE [LARGE SCALE GENOMIC DNA]</scope>
    <source>
        <strain evidence="11">ATCC 13032 / DSM 20300 / JCM 1318 / BCRC 11384 / CCUG 27702 / LMG 3730 / NBRC 12168 / NCIMB 10025 / NRRL B-2784 / 534</strain>
    </source>
</reference>
<reference key="4">
    <citation type="journal article" date="2010" name="J. Bacteriol.">
        <title>The E2 domain of OdhA of Corynebacterium glutamicum has succinyltransferase activity dependent on lipoyl residues of the acetyltransferase AceF.</title>
        <authorList>
            <person name="Hoffelder M."/>
            <person name="Raasch K."/>
            <person name="van Ooyen J."/>
            <person name="Eggeling L."/>
        </authorList>
    </citation>
    <scope>PROTEIN SEQUENCE OF 2-8</scope>
    <scope>FUNCTION AS E1 AND E2 COMPONENT OF ODH</scope>
    <scope>CATALYTIC ACTIVITY</scope>
    <scope>KINETIC PARAMETERS</scope>
    <scope>DOMAIN</scope>
    <scope>LACK OF LIPOYLATION</scope>
    <scope>ACTIVE SITE</scope>
    <scope>MUTAGENESIS OF THR-258; HIS-316 AND GLN-320</scope>
    <source>
        <strain>ATCC 13032 / DSM 20300 / JCM 1318 / BCRC 11384 / CCUG 27702 / LMG 3730 / NBRC 12168 / NCIMB 10025 / NRRL B-2784 / 534</strain>
    </source>
</reference>
<reference key="5">
    <citation type="journal article" date="2006" name="J. Biol. Chem.">
        <title>Corynebacterial protein kinase G controls 2-oxoglutarate dehydrogenase activity via the phosphorylation status of the OdhI protein.</title>
        <authorList>
            <person name="Niebisch A."/>
            <person name="Kabus A."/>
            <person name="Schultz C."/>
            <person name="Weil B."/>
            <person name="Bott M."/>
        </authorList>
    </citation>
    <scope>INHIBITION BY ODHI</scope>
    <scope>IDENTIFICATION IN THE ODH/PDH COMPLEX</scope>
    <source>
        <strain>ATCC 13032 / DSM 20300 / JCM 1318 / BCRC 11384 / CCUG 27702 / LMG 3730 / NBRC 12168 / NCIMB 10025 / NRRL B-2784 / 534</strain>
    </source>
</reference>
<reference key="6">
    <citation type="journal article" date="2007" name="Appl. Environ. Microbiol.">
        <title>Altered metabolic flux due to deletion of odhA causes L-glutamate overproduction in Corynebacterium glutamicum.</title>
        <authorList>
            <person name="Asakura Y."/>
            <person name="Kimura E."/>
            <person name="Usuda Y."/>
            <person name="Kawahara Y."/>
            <person name="Matsui K."/>
            <person name="Osumi T."/>
            <person name="Nakamatsu T."/>
        </authorList>
    </citation>
    <scope>DISRUPTION PHENOTYPE</scope>
    <source>
        <strain>ATCC 13869 / DSMZ 1412 / NCIMB 9567</strain>
    </source>
</reference>
<reference key="7">
    <citation type="journal article" date="2010" name="FEBS Lett.">
        <title>The FHA domain of OdhI interacts with the carboxyterminal 2-oxoglutarate dehydrogenase domain of OdhA in Corynebacterium glutamicum.</title>
        <authorList>
            <person name="Krawczyk S."/>
            <person name="Raasch K."/>
            <person name="Schultz C."/>
            <person name="Hoffelder M."/>
            <person name="Eggeling L."/>
            <person name="Bott M."/>
        </authorList>
    </citation>
    <scope>DOMAIN</scope>
    <scope>ACTIVITY REGULATION</scope>
    <scope>INTERACTION WITH ODHI</scope>
    <source>
        <strain>ATCC 13032 / DSM 20300 / JCM 1318 / BCRC 11384 / CCUG 27702 / LMG 3730 / NBRC 12168 / NCIMB 10025 / NRRL B-2784 / 534</strain>
    </source>
</reference>
<organism>
    <name type="scientific">Corynebacterium glutamicum (strain ATCC 13032 / DSM 20300 / JCM 1318 / BCRC 11384 / CCUG 27702 / LMG 3730 / NBRC 12168 / NCIMB 10025 / NRRL B-2784 / 534)</name>
    <dbReference type="NCBI Taxonomy" id="196627"/>
    <lineage>
        <taxon>Bacteria</taxon>
        <taxon>Bacillati</taxon>
        <taxon>Actinomycetota</taxon>
        <taxon>Actinomycetes</taxon>
        <taxon>Mycobacteriales</taxon>
        <taxon>Corynebacteriaceae</taxon>
        <taxon>Corynebacterium</taxon>
    </lineage>
</organism>
<accession>Q8NRC3</accession>
<accession>P96746</accession>
<accession>Q6M641</accession>
<keyword id="KW-0002">3D-structure</keyword>
<keyword id="KW-0012">Acyltransferase</keyword>
<keyword id="KW-0903">Direct protein sequencing</keyword>
<keyword id="KW-0460">Magnesium</keyword>
<keyword id="KW-0479">Metal-binding</keyword>
<keyword id="KW-0511">Multifunctional enzyme</keyword>
<keyword id="KW-0560">Oxidoreductase</keyword>
<keyword id="KW-1185">Reference proteome</keyword>
<keyword id="KW-0786">Thiamine pyrophosphate</keyword>
<keyword id="KW-0808">Transferase</keyword>
<keyword id="KW-0816">Tricarboxylic acid cycle</keyword>
<feature type="initiator methionine" description="Removed" evidence="8">
    <location>
        <position position="1"/>
    </location>
</feature>
<feature type="chain" id="PRO_0000273521" description="2-oxoglutarate dehydrogenase E1/E2 component">
    <location>
        <begin position="2"/>
        <end position="1221"/>
    </location>
</feature>
<feature type="region of interest" description="2-oxoglutarate dehydrogenase E1, N-terminal part">
    <location>
        <begin position="2"/>
        <end position="40"/>
    </location>
</feature>
<feature type="region of interest" description="Disordered" evidence="4">
    <location>
        <begin position="22"/>
        <end position="107"/>
    </location>
</feature>
<feature type="region of interest" description="Linker">
    <location>
        <begin position="41"/>
        <end position="89"/>
    </location>
</feature>
<feature type="region of interest" description="Succinyltransferase E2">
    <location>
        <begin position="90"/>
        <end position="337"/>
    </location>
</feature>
<feature type="region of interest" description="2-oxoglutarate dehydrogenase E1, C-terminal part">
    <location>
        <begin position="338"/>
        <end position="1221"/>
    </location>
</feature>
<feature type="compositionally biased region" description="Basic and acidic residues" evidence="4">
    <location>
        <begin position="23"/>
        <end position="36"/>
    </location>
</feature>
<feature type="compositionally biased region" description="Polar residues" evidence="4">
    <location>
        <begin position="41"/>
        <end position="52"/>
    </location>
</feature>
<feature type="compositionally biased region" description="Low complexity" evidence="4">
    <location>
        <begin position="53"/>
        <end position="73"/>
    </location>
</feature>
<feature type="compositionally biased region" description="Basic and acidic residues" evidence="4">
    <location>
        <begin position="74"/>
        <end position="90"/>
    </location>
</feature>
<feature type="active site" description="Proton acceptor; for succinyltransferase activity" evidence="8">
    <location>
        <position position="316"/>
    </location>
</feature>
<feature type="binding site" evidence="2">
    <location>
        <position position="544"/>
    </location>
    <ligand>
        <name>thiamine diphosphate</name>
        <dbReference type="ChEBI" id="CHEBI:58937"/>
    </ligand>
</feature>
<feature type="binding site" evidence="2">
    <location>
        <position position="583"/>
    </location>
    <ligand>
        <name>2-oxoglutarate</name>
        <dbReference type="ChEBI" id="CHEBI:16810"/>
    </ligand>
</feature>
<feature type="binding site" evidence="2">
    <location>
        <position position="608"/>
    </location>
    <ligand>
        <name>2-oxoglutarate</name>
        <dbReference type="ChEBI" id="CHEBI:16810"/>
    </ligand>
</feature>
<feature type="binding site" evidence="2">
    <location>
        <position position="608"/>
    </location>
    <ligand>
        <name>thiamine diphosphate</name>
        <dbReference type="ChEBI" id="CHEBI:58937"/>
    </ligand>
</feature>
<feature type="binding site" evidence="2">
    <location>
        <position position="610"/>
    </location>
    <ligand>
        <name>thiamine diphosphate</name>
        <dbReference type="ChEBI" id="CHEBI:58937"/>
    </ligand>
</feature>
<feature type="binding site" evidence="2">
    <location>
        <position position="645"/>
    </location>
    <ligand>
        <name>Mg(2+)</name>
        <dbReference type="ChEBI" id="CHEBI:18420"/>
    </ligand>
</feature>
<feature type="binding site" evidence="2">
    <location>
        <position position="645"/>
    </location>
    <ligand>
        <name>thiamine diphosphate</name>
        <dbReference type="ChEBI" id="CHEBI:58937"/>
    </ligand>
</feature>
<feature type="binding site" evidence="2">
    <location>
        <position position="646"/>
    </location>
    <ligand>
        <name>thiamine diphosphate</name>
        <dbReference type="ChEBI" id="CHEBI:58937"/>
    </ligand>
</feature>
<feature type="binding site" evidence="2">
    <location>
        <position position="647"/>
    </location>
    <ligand>
        <name>thiamine diphosphate</name>
        <dbReference type="ChEBI" id="CHEBI:58937"/>
    </ligand>
</feature>
<feature type="binding site" evidence="2">
    <location>
        <position position="678"/>
    </location>
    <ligand>
        <name>Mg(2+)</name>
        <dbReference type="ChEBI" id="CHEBI:18420"/>
    </ligand>
</feature>
<feature type="binding site" evidence="2">
    <location>
        <position position="678"/>
    </location>
    <ligand>
        <name>thiamine diphosphate</name>
        <dbReference type="ChEBI" id="CHEBI:58937"/>
    </ligand>
</feature>
<feature type="binding site" evidence="2">
    <location>
        <position position="680"/>
    </location>
    <ligand>
        <name>Mg(2+)</name>
        <dbReference type="ChEBI" id="CHEBI:18420"/>
    </ligand>
</feature>
<feature type="binding site" evidence="2">
    <location>
        <position position="1017"/>
    </location>
    <ligand>
        <name>2-oxoglutarate</name>
        <dbReference type="ChEBI" id="CHEBI:16810"/>
    </ligand>
</feature>
<feature type="binding site" evidence="2">
    <location>
        <position position="1035"/>
    </location>
    <ligand>
        <name>acetyl-CoA</name>
        <dbReference type="ChEBI" id="CHEBI:57288"/>
        <note>allosteric activator</note>
    </ligand>
</feature>
<feature type="binding site" evidence="2">
    <location>
        <position position="1051"/>
    </location>
    <ligand>
        <name>acetyl-CoA</name>
        <dbReference type="ChEBI" id="CHEBI:57288"/>
        <note>allosteric activator</note>
    </ligand>
</feature>
<feature type="binding site" evidence="2">
    <location>
        <position position="1087"/>
    </location>
    <ligand>
        <name>acetyl-CoA</name>
        <dbReference type="ChEBI" id="CHEBI:57288"/>
        <note>allosteric activator</note>
    </ligand>
</feature>
<feature type="binding site" evidence="2">
    <location>
        <position position="1090"/>
    </location>
    <ligand>
        <name>acetyl-CoA</name>
        <dbReference type="ChEBI" id="CHEBI:57288"/>
        <note>allosteric activator</note>
    </ligand>
</feature>
<feature type="binding site" evidence="2">
    <location>
        <position position="1144"/>
    </location>
    <ligand>
        <name>acetyl-CoA</name>
        <dbReference type="ChEBI" id="CHEBI:57288"/>
        <note>allosteric activator</note>
    </ligand>
</feature>
<feature type="mutagenesis site" description="Loss of E2 succinyltransferase activity, but nearly no effect on E1 dehydrogenase activity." evidence="8">
    <original>T</original>
    <variation>A</variation>
    <location>
        <position position="258"/>
    </location>
</feature>
<feature type="mutagenesis site" description="Loss of E2 succinyltransferase activity, and 2-fold reduction in E1 dehydrogenase activity." evidence="8">
    <original>H</original>
    <variation>C</variation>
    <location>
        <position position="316"/>
    </location>
</feature>
<feature type="mutagenesis site" description="Slight reduction in E2 succinyltransferase activity and in E1 dehydrogenase activity." evidence="8">
    <original>Q</original>
    <variation>D</variation>
    <location>
        <position position="320"/>
    </location>
</feature>
<feature type="sequence conflict" description="In Ref. 1; BAA12222." evidence="10" ref="1">
    <original>T</original>
    <variation>A</variation>
    <location>
        <position position="44"/>
    </location>
</feature>
<feature type="sequence conflict" description="In Ref. 1; BAA12222." evidence="10" ref="1">
    <original>D</original>
    <variation>A</variation>
    <location>
        <position position="82"/>
    </location>
</feature>
<feature type="sequence conflict" description="In Ref. 1; BAA12222." evidence="10" ref="1">
    <original>A</original>
    <variation>T</variation>
    <location>
        <position position="238"/>
    </location>
</feature>
<feature type="sequence conflict" description="In Ref. 1; BAA12222." evidence="10" ref="1">
    <original>N</original>
    <variation>S</variation>
    <location>
        <position position="413"/>
    </location>
</feature>
<feature type="sequence conflict" description="In Ref. 1; BAA12222." evidence="10" ref="1">
    <original>N</original>
    <variation>S</variation>
    <location>
        <position position="424"/>
    </location>
</feature>
<feature type="sequence conflict" description="In Ref. 1; BAA12222." evidence="10" ref="1">
    <original>I</original>
    <variation>V</variation>
    <location>
        <position position="967"/>
    </location>
</feature>
<feature type="sequence conflict" description="In Ref. 1; BAA12222." evidence="10" ref="1">
    <original>N</original>
    <variation>D</variation>
    <location>
        <position position="1093"/>
    </location>
</feature>
<feature type="strand" evidence="14">
    <location>
        <begin position="103"/>
        <end position="106"/>
    </location>
</feature>
<feature type="helix" evidence="14">
    <location>
        <begin position="110"/>
        <end position="120"/>
    </location>
</feature>
<feature type="helix" evidence="14">
    <location>
        <begin position="121"/>
        <end position="123"/>
    </location>
</feature>
<feature type="strand" evidence="14">
    <location>
        <begin position="126"/>
        <end position="134"/>
    </location>
</feature>
<feature type="helix" evidence="14">
    <location>
        <begin position="136"/>
        <end position="152"/>
    </location>
</feature>
<feature type="helix" evidence="14">
    <location>
        <begin position="159"/>
        <end position="173"/>
    </location>
</feature>
<feature type="helix" evidence="14">
    <location>
        <begin position="175"/>
        <end position="178"/>
    </location>
</feature>
<feature type="strand" evidence="14">
    <location>
        <begin position="180"/>
        <end position="184"/>
    </location>
</feature>
<feature type="strand" evidence="14">
    <location>
        <begin position="187"/>
        <end position="192"/>
    </location>
</feature>
<feature type="strand" evidence="14">
    <location>
        <begin position="198"/>
        <end position="205"/>
    </location>
</feature>
<feature type="strand" evidence="13">
    <location>
        <begin position="207"/>
        <end position="209"/>
    </location>
</feature>
<feature type="strand" evidence="14">
    <location>
        <begin position="211"/>
        <end position="218"/>
    </location>
</feature>
<feature type="helix" evidence="14">
    <location>
        <begin position="221"/>
        <end position="223"/>
    </location>
</feature>
<feature type="helix" evidence="14">
    <location>
        <begin position="226"/>
        <end position="242"/>
    </location>
</feature>
<feature type="helix" evidence="14">
    <location>
        <begin position="247"/>
        <end position="250"/>
    </location>
</feature>
<feature type="strand" evidence="14">
    <location>
        <begin position="255"/>
        <end position="258"/>
    </location>
</feature>
<feature type="helix" evidence="14">
    <location>
        <begin position="260"/>
        <end position="262"/>
    </location>
</feature>
<feature type="strand" evidence="14">
    <location>
        <begin position="266"/>
        <end position="269"/>
    </location>
</feature>
<feature type="strand" evidence="14">
    <location>
        <begin position="277"/>
        <end position="282"/>
    </location>
</feature>
<feature type="helix" evidence="14">
    <location>
        <begin position="289"/>
        <end position="291"/>
    </location>
</feature>
<feature type="helix" evidence="14">
    <location>
        <begin position="296"/>
        <end position="302"/>
    </location>
</feature>
<feature type="strand" evidence="14">
    <location>
        <begin position="307"/>
        <end position="315"/>
    </location>
</feature>
<feature type="turn" evidence="14">
    <location>
        <begin position="316"/>
        <end position="318"/>
    </location>
</feature>
<feature type="helix" evidence="14">
    <location>
        <begin position="321"/>
        <end position="334"/>
    </location>
</feature>
<feature type="helix" evidence="14">
    <location>
        <begin position="338"/>
        <end position="348"/>
    </location>
</feature>
<feature type="helix" evidence="14">
    <location>
        <begin position="368"/>
        <end position="382"/>
    </location>
</feature>
<feature type="helix" evidence="14">
    <location>
        <begin position="383"/>
        <end position="386"/>
    </location>
</feature>
<feature type="strand" evidence="14">
    <location>
        <begin position="391"/>
        <end position="393"/>
    </location>
</feature>
<feature type="strand" evidence="15">
    <location>
        <begin position="397"/>
        <end position="399"/>
    </location>
</feature>
<feature type="helix" evidence="14">
    <location>
        <begin position="405"/>
        <end position="407"/>
    </location>
</feature>
<feature type="helix" evidence="14">
    <location>
        <begin position="409"/>
        <end position="412"/>
    </location>
</feature>
<feature type="helix" evidence="14">
    <location>
        <begin position="416"/>
        <end position="418"/>
    </location>
</feature>
<feature type="strand" evidence="14">
    <location>
        <begin position="421"/>
        <end position="424"/>
    </location>
</feature>
<feature type="helix" evidence="14">
    <location>
        <begin position="428"/>
        <end position="430"/>
    </location>
</feature>
<feature type="strand" evidence="14">
    <location>
        <begin position="432"/>
        <end position="435"/>
    </location>
</feature>
<feature type="helix" evidence="14">
    <location>
        <begin position="436"/>
        <end position="447"/>
    </location>
</feature>
<feature type="strand" evidence="14">
    <location>
        <begin position="448"/>
        <end position="454"/>
    </location>
</feature>
<feature type="helix" evidence="14">
    <location>
        <begin position="461"/>
        <end position="473"/>
    </location>
</feature>
<feature type="helix" evidence="14">
    <location>
        <begin position="480"/>
        <end position="503"/>
    </location>
</feature>
<feature type="strand" evidence="13">
    <location>
        <begin position="505"/>
        <end position="507"/>
    </location>
</feature>
<feature type="helix" evidence="12">
    <location>
        <begin position="508"/>
        <end position="510"/>
    </location>
</feature>
<feature type="helix" evidence="14">
    <location>
        <begin position="518"/>
        <end position="531"/>
    </location>
</feature>
<feature type="strand" evidence="14">
    <location>
        <begin position="536"/>
        <end position="540"/>
    </location>
</feature>
<feature type="helix" evidence="14">
    <location>
        <begin position="546"/>
        <end position="552"/>
    </location>
</feature>
<feature type="helix" evidence="14">
    <location>
        <begin position="558"/>
        <end position="566"/>
    </location>
</feature>
<feature type="helix" evidence="14">
    <location>
        <begin position="581"/>
        <end position="583"/>
    </location>
</feature>
<feature type="strand" evidence="14">
    <location>
        <begin position="586"/>
        <end position="591"/>
    </location>
</feature>
<feature type="strand" evidence="14">
    <location>
        <begin position="598"/>
        <end position="603"/>
    </location>
</feature>
<feature type="turn" evidence="14">
    <location>
        <begin position="610"/>
        <end position="612"/>
    </location>
</feature>
<feature type="helix" evidence="14">
    <location>
        <begin position="613"/>
        <end position="628"/>
    </location>
</feature>
<feature type="strand" evidence="14">
    <location>
        <begin position="637"/>
        <end position="644"/>
    </location>
</feature>
<feature type="helix" evidence="14">
    <location>
        <begin position="645"/>
        <end position="650"/>
    </location>
</feature>
<feature type="helix" evidence="14">
    <location>
        <begin position="653"/>
        <end position="658"/>
    </location>
</feature>
<feature type="turn" evidence="14">
    <location>
        <begin position="659"/>
        <end position="662"/>
    </location>
</feature>
<feature type="turn" evidence="14">
    <location>
        <begin position="664"/>
        <end position="666"/>
    </location>
</feature>
<feature type="strand" evidence="14">
    <location>
        <begin position="672"/>
        <end position="677"/>
    </location>
</feature>
<feature type="strand" evidence="14">
    <location>
        <begin position="681"/>
        <end position="683"/>
    </location>
</feature>
<feature type="helix" evidence="14">
    <location>
        <begin position="686"/>
        <end position="688"/>
    </location>
</feature>
<feature type="strand" evidence="14">
    <location>
        <begin position="691"/>
        <end position="694"/>
    </location>
</feature>
<feature type="helix" evidence="14">
    <location>
        <begin position="695"/>
        <end position="697"/>
    </location>
</feature>
<feature type="helix" evidence="14">
    <location>
        <begin position="698"/>
        <end position="702"/>
    </location>
</feature>
<feature type="strand" evidence="14">
    <location>
        <begin position="706"/>
        <end position="710"/>
    </location>
</feature>
<feature type="helix" evidence="14">
    <location>
        <begin position="714"/>
        <end position="731"/>
    </location>
</feature>
<feature type="strand" evidence="14">
    <location>
        <begin position="735"/>
        <end position="740"/>
    </location>
</feature>
<feature type="strand" evidence="12">
    <location>
        <begin position="747"/>
        <end position="750"/>
    </location>
</feature>
<feature type="turn" evidence="14">
    <location>
        <begin position="753"/>
        <end position="756"/>
    </location>
</feature>
<feature type="helix" evidence="14">
    <location>
        <begin position="760"/>
        <end position="764"/>
    </location>
</feature>
<feature type="helix" evidence="14">
    <location>
        <begin position="770"/>
        <end position="780"/>
    </location>
</feature>
<feature type="helix" evidence="14">
    <location>
        <begin position="786"/>
        <end position="809"/>
    </location>
</feature>
<feature type="helix" evidence="14">
    <location>
        <begin position="837"/>
        <end position="845"/>
    </location>
</feature>
<feature type="turn" evidence="14">
    <location>
        <begin position="846"/>
        <end position="848"/>
    </location>
</feature>
<feature type="turn" evidence="14">
    <location>
        <begin position="858"/>
        <end position="860"/>
    </location>
</feature>
<feature type="helix" evidence="14">
    <location>
        <begin position="861"/>
        <end position="873"/>
    </location>
</feature>
<feature type="helix" evidence="14">
    <location>
        <begin position="878"/>
        <end position="892"/>
    </location>
</feature>
<feature type="strand" evidence="14">
    <location>
        <begin position="895"/>
        <end position="900"/>
    </location>
</feature>
<feature type="turn" evidence="14">
    <location>
        <begin position="901"/>
        <end position="905"/>
    </location>
</feature>
<feature type="strand" evidence="14">
    <location>
        <begin position="913"/>
        <end position="916"/>
    </location>
</feature>
<feature type="turn" evidence="14">
    <location>
        <begin position="918"/>
        <end position="920"/>
    </location>
</feature>
<feature type="helix" evidence="14">
    <location>
        <begin position="926"/>
        <end position="932"/>
    </location>
</feature>
<feature type="strand" evidence="14">
    <location>
        <begin position="934"/>
        <end position="936"/>
    </location>
</feature>
<feature type="strand" evidence="14">
    <location>
        <begin position="939"/>
        <end position="944"/>
    </location>
</feature>
<feature type="helix" evidence="14">
    <location>
        <begin position="950"/>
        <end position="962"/>
    </location>
</feature>
<feature type="strand" evidence="14">
    <location>
        <begin position="966"/>
        <end position="971"/>
    </location>
</feature>
<feature type="helix" evidence="14">
    <location>
        <begin position="975"/>
        <end position="981"/>
    </location>
</feature>
<feature type="helix" evidence="14">
    <location>
        <begin position="982"/>
        <end position="987"/>
    </location>
</feature>
<feature type="turn" evidence="14">
    <location>
        <begin position="988"/>
        <end position="991"/>
    </location>
</feature>
<feature type="helix" evidence="14">
    <location>
        <begin position="992"/>
        <end position="996"/>
    </location>
</feature>
<feature type="strand" evidence="14">
    <location>
        <begin position="1003"/>
        <end position="1007"/>
    </location>
</feature>
<feature type="strand" evidence="14">
    <location>
        <begin position="1011"/>
        <end position="1013"/>
    </location>
</feature>
<feature type="helix" evidence="14">
    <location>
        <begin position="1022"/>
        <end position="1028"/>
    </location>
</feature>
<feature type="strand" evidence="14">
    <location>
        <begin position="1035"/>
        <end position="1037"/>
    </location>
</feature>
<feature type="helix" evidence="14">
    <location>
        <begin position="1042"/>
        <end position="1054"/>
    </location>
</feature>
<feature type="strand" evidence="14">
    <location>
        <begin position="1061"/>
        <end position="1065"/>
    </location>
</feature>
<feature type="helix" evidence="14">
    <location>
        <begin position="1069"/>
        <end position="1071"/>
    </location>
</feature>
<feature type="helix" evidence="14">
    <location>
        <begin position="1073"/>
        <end position="1075"/>
    </location>
</feature>
<feature type="helix" evidence="14">
    <location>
        <begin position="1080"/>
        <end position="1083"/>
    </location>
</feature>
<feature type="strand" evidence="14">
    <location>
        <begin position="1090"/>
        <end position="1092"/>
    </location>
</feature>
<feature type="helix" evidence="14">
    <location>
        <begin position="1100"/>
        <end position="1102"/>
    </location>
</feature>
<feature type="strand" evidence="14">
    <location>
        <begin position="1105"/>
        <end position="1109"/>
    </location>
</feature>
<feature type="helix" evidence="14">
    <location>
        <begin position="1113"/>
        <end position="1124"/>
    </location>
</feature>
<feature type="strand" evidence="14">
    <location>
        <begin position="1129"/>
        <end position="1134"/>
    </location>
</feature>
<feature type="strand" evidence="14">
    <location>
        <begin position="1136"/>
        <end position="1139"/>
    </location>
</feature>
<feature type="helix" evidence="14">
    <location>
        <begin position="1142"/>
        <end position="1150"/>
    </location>
</feature>
<feature type="strand" evidence="14">
    <location>
        <begin position="1157"/>
        <end position="1165"/>
    </location>
</feature>
<feature type="helix" evidence="14">
    <location>
        <begin position="1171"/>
        <end position="1181"/>
    </location>
</feature>
<feature type="strand" evidence="14">
    <location>
        <begin position="1188"/>
        <end position="1193"/>
    </location>
</feature>
<feature type="strand" evidence="14">
    <location>
        <begin position="1197"/>
        <end position="1200"/>
    </location>
</feature>
<feature type="helix" evidence="14">
    <location>
        <begin position="1204"/>
        <end position="1218"/>
    </location>
</feature>
<sequence length="1221" mass="134664">MSSASTFGQNAWLVDEMFQQFQKDPKSVDKEWRELFEAQGGPNTTPATTEAQPSAPKESAKPAPKAAPAAKAAPRVETKPADKTAPKAKESSVPQQPKLPEPGQTPIRGIFKSIAKNMDISLEIPTATSVRDMPARLMFENRAMVNDQLKRTRGGKISFTHIIGYAMVKAVMAHPDMNNSYDVIDGKPTLIVPEHINLGLAIDLPQKDGSRALVVAAIKETEKMNFSEFLAAYEDIVARSRKGKLTMDDYQGVTVSLTNPGGIGTRHSVPRLTKGQGTIIGVGSMDYPAEFQGASEDRLAELGVGKLVTITSTYDHRVIQGAVSGEFLRTMSRLLTDDSFWDEIFDAMNVPYTPMRWAQDVPNTGVDKNTRVMQLIEAYRSRGHLIADTNPLSWVQPGMPVPDHRDLDIETHNLTIWDLDRTFNVGGFGGKETMTLREVLSRLRAAYTLKVGSEYTHILDRDERTWLQDRLEAGMPKPTQAEQKYILQKLNAAEAFENFLQTKYVGQKRFSLEGAEALIPLMDSAIDTAAGQGLDEVVIGMPHRGRLNVLFNIVGKPLASIFNEFEGQMEQGQIGGSGDVKYHLGSEGQHLQMFGDGEIKVSLTANPSHLEAVNPVMEGIVRAKQDYLDKGVDGKTVVPLLLHGDAAFAGLGIVPETINLAKLRGYDVGGTIHIVVNNQIGFTTTPDSSRSMHYATDYAKAFGCPVFHVNGDDPEAVVWVGQLATEYRRRFGKDVFIDLVCYRLRGHNEADDPSMTQPKMYELITGRETVRAQYTEDLLGRGDLSNEDAEAVVRDFHDQMESVFNEVKEGGKKQAEAQTGITGSQKLPHGLETNISREELLELGQAFANTPEGFNYHPRVAPVAKKRVSSVTEGGIDWAWGELLAFGSLANSGRLVRLAGEDSRRGTFTQRHAVAIDPATAEEFNPLHELAQSKGNNGKFLVYNSALTEYAGMGFEYGYSVGNEDSIVAWEAQFGDFANGAQTIIDEYVSSGEAKWGQTSKLILLLPHGYEGQGPDHSSARIERFLQLCAEGSMTVAQPSTPANHFHLLRRHALSDLKRPLVIFTPKSMLRNKAAASAPEDFTEVTKFQSVINDPNVADAAKVKKVMLVSGKLYYELAKRKEKDGRDDIAIVRIEMLHPIPFNRISEALAGYPNAEEVLFVQDEPANQGPWPFYQEHLPELIPNMPKMRRVSRRAQSSTATGVAKVHQLEEKQLIDEAFEA</sequence>
<name>ODO12_CORGL</name>
<evidence type="ECO:0000250" key="1"/>
<evidence type="ECO:0000250" key="2">
    <source>
        <dbReference type="UniProtKB" id="A0R2B1"/>
    </source>
</evidence>
<evidence type="ECO:0000250" key="3">
    <source>
        <dbReference type="UniProtKB" id="P0AFG3"/>
    </source>
</evidence>
<evidence type="ECO:0000256" key="4">
    <source>
        <dbReference type="SAM" id="MobiDB-lite"/>
    </source>
</evidence>
<evidence type="ECO:0000269" key="5">
    <source>
    </source>
</evidence>
<evidence type="ECO:0000269" key="6">
    <source>
    </source>
</evidence>
<evidence type="ECO:0000269" key="7">
    <source>
    </source>
</evidence>
<evidence type="ECO:0000269" key="8">
    <source>
    </source>
</evidence>
<evidence type="ECO:0000269" key="9">
    <source>
    </source>
</evidence>
<evidence type="ECO:0000305" key="10"/>
<evidence type="ECO:0000312" key="11">
    <source>
        <dbReference type="EMBL" id="CAF19835.1"/>
    </source>
</evidence>
<evidence type="ECO:0007829" key="12">
    <source>
        <dbReference type="PDB" id="8P5S"/>
    </source>
</evidence>
<evidence type="ECO:0007829" key="13">
    <source>
        <dbReference type="PDB" id="8P5T"/>
    </source>
</evidence>
<evidence type="ECO:0007829" key="14">
    <source>
        <dbReference type="PDB" id="8P5V"/>
    </source>
</evidence>
<evidence type="ECO:0007829" key="15">
    <source>
        <dbReference type="PDB" id="8P5X"/>
    </source>
</evidence>